<proteinExistence type="inferred from homology"/>
<reference key="1">
    <citation type="journal article" date="2005" name="Nucleic Acids Res.">
        <title>Genome dynamics and diversity of Shigella species, the etiologic agents of bacillary dysentery.</title>
        <authorList>
            <person name="Yang F."/>
            <person name="Yang J."/>
            <person name="Zhang X."/>
            <person name="Chen L."/>
            <person name="Jiang Y."/>
            <person name="Yan Y."/>
            <person name="Tang X."/>
            <person name="Wang J."/>
            <person name="Xiong Z."/>
            <person name="Dong J."/>
            <person name="Xue Y."/>
            <person name="Zhu Y."/>
            <person name="Xu X."/>
            <person name="Sun L."/>
            <person name="Chen S."/>
            <person name="Nie H."/>
            <person name="Peng J."/>
            <person name="Xu J."/>
            <person name="Wang Y."/>
            <person name="Yuan Z."/>
            <person name="Wen Y."/>
            <person name="Yao Z."/>
            <person name="Shen Y."/>
            <person name="Qiang B."/>
            <person name="Hou Y."/>
            <person name="Yu J."/>
            <person name="Jin Q."/>
        </authorList>
    </citation>
    <scope>NUCLEOTIDE SEQUENCE [LARGE SCALE GENOMIC DNA]</scope>
    <source>
        <strain>Ss046</strain>
    </source>
</reference>
<keyword id="KW-0997">Cell inner membrane</keyword>
<keyword id="KW-1003">Cell membrane</keyword>
<keyword id="KW-0472">Membrane</keyword>
<keyword id="KW-1185">Reference proteome</keyword>
<keyword id="KW-0762">Sugar transport</keyword>
<keyword id="KW-0812">Transmembrane</keyword>
<keyword id="KW-1133">Transmembrane helix</keyword>
<keyword id="KW-0813">Transport</keyword>
<accession>Q3Z1R4</accession>
<sequence length="396" mass="42538">MTTNTVSRKVAWLRVVTLAVAAFIFNTTEFVPVGLLSDIAQSFHMQTAQVGIMLTIYAWVVALMSLPFMLMTSQVERRKLLICLFVVFIASHVLSFLSWSFTVLVISRIGVAFAHAIFWSITASLAIRMAPAGKRAQALSLIATGTALAMVLGLPLGRIVGQYFGWRMTFFAIGIGALITLLCLIKLLPLLPSEHSGSLKSLPLLFRRPALMSIYLLTVVVVTAHYTAYSYIEPFVQNIAGFSANFATALLLLLGGAGIIGSVIFGKLGNQYASALVSTAIALLLVCLALLLPAANSEIHLGVLSIFWGIAMMIIGLGMQVKVLALAPDATDVAMALFSGIFNIGIGAGALVGNQVSLHWSMSMIGYVGAVPAFAALIWSIIIFRRWPVTLEEQTQ</sequence>
<gene>
    <name evidence="1" type="primary">sotB</name>
    <name type="ordered locus">SSON_1600</name>
</gene>
<organism>
    <name type="scientific">Shigella sonnei (strain Ss046)</name>
    <dbReference type="NCBI Taxonomy" id="300269"/>
    <lineage>
        <taxon>Bacteria</taxon>
        <taxon>Pseudomonadati</taxon>
        <taxon>Pseudomonadota</taxon>
        <taxon>Gammaproteobacteria</taxon>
        <taxon>Enterobacterales</taxon>
        <taxon>Enterobacteriaceae</taxon>
        <taxon>Shigella</taxon>
    </lineage>
</organism>
<feature type="chain" id="PRO_0000259258" description="Probable sugar efflux transporter">
    <location>
        <begin position="1"/>
        <end position="396"/>
    </location>
</feature>
<feature type="transmembrane region" description="Helical" evidence="1">
    <location>
        <begin position="15"/>
        <end position="35"/>
    </location>
</feature>
<feature type="transmembrane region" description="Helical" evidence="1">
    <location>
        <begin position="50"/>
        <end position="70"/>
    </location>
</feature>
<feature type="transmembrane region" description="Helical" evidence="1">
    <location>
        <begin position="81"/>
        <end position="101"/>
    </location>
</feature>
<feature type="transmembrane region" description="Helical" evidence="1">
    <location>
        <begin position="103"/>
        <end position="123"/>
    </location>
</feature>
<feature type="transmembrane region" description="Helical" evidence="1">
    <location>
        <begin position="136"/>
        <end position="156"/>
    </location>
</feature>
<feature type="transmembrane region" description="Helical" evidence="1">
    <location>
        <begin position="170"/>
        <end position="190"/>
    </location>
</feature>
<feature type="transmembrane region" description="Helical" evidence="1">
    <location>
        <begin position="209"/>
        <end position="229"/>
    </location>
</feature>
<feature type="transmembrane region" description="Helical" evidence="1">
    <location>
        <begin position="246"/>
        <end position="266"/>
    </location>
</feature>
<feature type="transmembrane region" description="Helical" evidence="1">
    <location>
        <begin position="275"/>
        <end position="295"/>
    </location>
</feature>
<feature type="transmembrane region" description="Helical" evidence="1">
    <location>
        <begin position="299"/>
        <end position="319"/>
    </location>
</feature>
<feature type="transmembrane region" description="Helical" evidence="1">
    <location>
        <begin position="333"/>
        <end position="353"/>
    </location>
</feature>
<feature type="transmembrane region" description="Helical" evidence="1">
    <location>
        <begin position="364"/>
        <end position="384"/>
    </location>
</feature>
<name>SOTB_SHISS</name>
<evidence type="ECO:0000255" key="1">
    <source>
        <dbReference type="HAMAP-Rule" id="MF_00517"/>
    </source>
</evidence>
<protein>
    <recommendedName>
        <fullName evidence="1">Probable sugar efflux transporter</fullName>
    </recommendedName>
</protein>
<comment type="function">
    <text evidence="1">Involved in the efflux of sugars. The physiological role may be the reduction of the intracellular concentration of toxic sugars or sugar metabolites.</text>
</comment>
<comment type="subcellular location">
    <subcellularLocation>
        <location evidence="1">Cell inner membrane</location>
        <topology evidence="1">Multi-pass membrane protein</topology>
    </subcellularLocation>
</comment>
<comment type="similarity">
    <text evidence="1">Belongs to the major facilitator superfamily. SotB (TC 2.A.1.2) family.</text>
</comment>
<dbReference type="EMBL" id="CP000038">
    <property type="protein sequence ID" value="AAZ88298.1"/>
    <property type="molecule type" value="Genomic_DNA"/>
</dbReference>
<dbReference type="SMR" id="Q3Z1R4"/>
<dbReference type="KEGG" id="ssn:SSON_1600"/>
<dbReference type="HOGENOM" id="CLU_001265_61_1_6"/>
<dbReference type="Proteomes" id="UP000002529">
    <property type="component" value="Chromosome"/>
</dbReference>
<dbReference type="GO" id="GO:0005886">
    <property type="term" value="C:plasma membrane"/>
    <property type="evidence" value="ECO:0007669"/>
    <property type="project" value="UniProtKB-SubCell"/>
</dbReference>
<dbReference type="GO" id="GO:0015144">
    <property type="term" value="F:carbohydrate transmembrane transporter activity"/>
    <property type="evidence" value="ECO:0007669"/>
    <property type="project" value="UniProtKB-UniRule"/>
</dbReference>
<dbReference type="CDD" id="cd17324">
    <property type="entry name" value="MFS_NepI_like"/>
    <property type="match status" value="1"/>
</dbReference>
<dbReference type="FunFam" id="1.20.1250.20:FF:000079">
    <property type="entry name" value="Probable sugar efflux transporter"/>
    <property type="match status" value="1"/>
</dbReference>
<dbReference type="Gene3D" id="1.20.1250.20">
    <property type="entry name" value="MFS general substrate transporter like domains"/>
    <property type="match status" value="1"/>
</dbReference>
<dbReference type="HAMAP" id="MF_00517">
    <property type="entry name" value="MFS_SotB"/>
    <property type="match status" value="1"/>
</dbReference>
<dbReference type="InterPro" id="IPR011701">
    <property type="entry name" value="MFS"/>
</dbReference>
<dbReference type="InterPro" id="IPR020846">
    <property type="entry name" value="MFS_dom"/>
</dbReference>
<dbReference type="InterPro" id="IPR050189">
    <property type="entry name" value="MFS_Efflux_Transporters"/>
</dbReference>
<dbReference type="InterPro" id="IPR036259">
    <property type="entry name" value="MFS_trans_sf"/>
</dbReference>
<dbReference type="InterPro" id="IPR023495">
    <property type="entry name" value="Sugar_effux_transptr_put"/>
</dbReference>
<dbReference type="NCBIfam" id="NF002921">
    <property type="entry name" value="PRK03545.1"/>
    <property type="match status" value="1"/>
</dbReference>
<dbReference type="PANTHER" id="PTHR43124">
    <property type="entry name" value="PURINE EFFLUX PUMP PBUE"/>
    <property type="match status" value="1"/>
</dbReference>
<dbReference type="PANTHER" id="PTHR43124:SF4">
    <property type="entry name" value="SUGAR EFFLUX TRANSPORTER"/>
    <property type="match status" value="1"/>
</dbReference>
<dbReference type="Pfam" id="PF07690">
    <property type="entry name" value="MFS_1"/>
    <property type="match status" value="1"/>
</dbReference>
<dbReference type="SUPFAM" id="SSF103473">
    <property type="entry name" value="MFS general substrate transporter"/>
    <property type="match status" value="1"/>
</dbReference>
<dbReference type="PROSITE" id="PS50850">
    <property type="entry name" value="MFS"/>
    <property type="match status" value="1"/>
</dbReference>